<evidence type="ECO:0000255" key="1">
    <source>
        <dbReference type="HAMAP-Rule" id="MF_01849"/>
    </source>
</evidence>
<evidence type="ECO:0000255" key="2">
    <source>
        <dbReference type="PROSITE-ProRule" id="PRU01266"/>
    </source>
</evidence>
<comment type="function">
    <text evidence="1">Specifically methylates position 2 of adenine 2503 in 23S rRNA and position 2 of adenine 37 in tRNAs.</text>
</comment>
<comment type="catalytic activity">
    <reaction evidence="1">
        <text>adenosine(2503) in 23S rRNA + 2 reduced [2Fe-2S]-[ferredoxin] + 2 S-adenosyl-L-methionine = 2-methyladenosine(2503) in 23S rRNA + 5'-deoxyadenosine + L-methionine + 2 oxidized [2Fe-2S]-[ferredoxin] + S-adenosyl-L-homocysteine</text>
        <dbReference type="Rhea" id="RHEA:42916"/>
        <dbReference type="Rhea" id="RHEA-COMP:10000"/>
        <dbReference type="Rhea" id="RHEA-COMP:10001"/>
        <dbReference type="Rhea" id="RHEA-COMP:10152"/>
        <dbReference type="Rhea" id="RHEA-COMP:10282"/>
        <dbReference type="ChEBI" id="CHEBI:17319"/>
        <dbReference type="ChEBI" id="CHEBI:33737"/>
        <dbReference type="ChEBI" id="CHEBI:33738"/>
        <dbReference type="ChEBI" id="CHEBI:57844"/>
        <dbReference type="ChEBI" id="CHEBI:57856"/>
        <dbReference type="ChEBI" id="CHEBI:59789"/>
        <dbReference type="ChEBI" id="CHEBI:74411"/>
        <dbReference type="ChEBI" id="CHEBI:74497"/>
        <dbReference type="EC" id="2.1.1.192"/>
    </reaction>
</comment>
<comment type="catalytic activity">
    <reaction evidence="1">
        <text>adenosine(37) in tRNA + 2 reduced [2Fe-2S]-[ferredoxin] + 2 S-adenosyl-L-methionine = 2-methyladenosine(37) in tRNA + 5'-deoxyadenosine + L-methionine + 2 oxidized [2Fe-2S]-[ferredoxin] + S-adenosyl-L-homocysteine</text>
        <dbReference type="Rhea" id="RHEA:43332"/>
        <dbReference type="Rhea" id="RHEA-COMP:10000"/>
        <dbReference type="Rhea" id="RHEA-COMP:10001"/>
        <dbReference type="Rhea" id="RHEA-COMP:10162"/>
        <dbReference type="Rhea" id="RHEA-COMP:10485"/>
        <dbReference type="ChEBI" id="CHEBI:17319"/>
        <dbReference type="ChEBI" id="CHEBI:33737"/>
        <dbReference type="ChEBI" id="CHEBI:33738"/>
        <dbReference type="ChEBI" id="CHEBI:57844"/>
        <dbReference type="ChEBI" id="CHEBI:57856"/>
        <dbReference type="ChEBI" id="CHEBI:59789"/>
        <dbReference type="ChEBI" id="CHEBI:74411"/>
        <dbReference type="ChEBI" id="CHEBI:74497"/>
        <dbReference type="EC" id="2.1.1.192"/>
    </reaction>
</comment>
<comment type="cofactor">
    <cofactor evidence="1">
        <name>[4Fe-4S] cluster</name>
        <dbReference type="ChEBI" id="CHEBI:49883"/>
    </cofactor>
    <text evidence="1">Binds 1 [4Fe-4S] cluster. The cluster is coordinated with 3 cysteines and an exchangeable S-adenosyl-L-methionine.</text>
</comment>
<comment type="subcellular location">
    <subcellularLocation>
        <location evidence="1">Cytoplasm</location>
    </subcellularLocation>
</comment>
<comment type="miscellaneous">
    <text evidence="1">Reaction proceeds by a ping-pong mechanism involving intermediate methylation of a conserved cysteine residue.</text>
</comment>
<comment type="similarity">
    <text evidence="1">Belongs to the radical SAM superfamily. RlmN family.</text>
</comment>
<sequence length="369" mass="40490">MATPLPLVFSAPKRGMPPAHFADLSDEQRIEALSELGLPKFRLNQIARHYYGRLEADPMTMTDLPEAARAKVKDALFPTLMEPIRVVEADDENTQKTLWKLHDGTLLESVLMRYPDRATLCISSQAGCGMACPFCATGQGGLDRNLSVGEIVDQVRNAAATMQAEGGRLSNIVFMGMGEPLANYKRVVSAVRQITQPSPEGFGISQRSVTVSTVGLAPAIRKLADEDMSVTLAVSLHTPDDELRDELVPVNNRWSVAEVLDAARYYADKSGRRVSIEYALIRDVNDQGWRADMLGQKLHKALGSRVHVNLIPLNPTPGSKWDASPRERQDEFVRRVIAQGVPCTVRDTKGQEIAAACGQLAAEENSEEK</sequence>
<name>RLMN_COREF</name>
<accession>Q8FP78</accession>
<organism>
    <name type="scientific">Corynebacterium efficiens (strain DSM 44549 / YS-314 / AJ 12310 / JCM 11189 / NBRC 100395)</name>
    <dbReference type="NCBI Taxonomy" id="196164"/>
    <lineage>
        <taxon>Bacteria</taxon>
        <taxon>Bacillati</taxon>
        <taxon>Actinomycetota</taxon>
        <taxon>Actinomycetes</taxon>
        <taxon>Mycobacteriales</taxon>
        <taxon>Corynebacteriaceae</taxon>
        <taxon>Corynebacterium</taxon>
    </lineage>
</organism>
<gene>
    <name evidence="1" type="primary">rlmN</name>
    <name type="ordered locus">CE1907</name>
</gene>
<feature type="chain" id="PRO_0000350135" description="Probable dual-specificity RNA methyltransferase RlmN">
    <location>
        <begin position="1"/>
        <end position="369"/>
    </location>
</feature>
<feature type="domain" description="Radical SAM core" evidence="2">
    <location>
        <begin position="114"/>
        <end position="352"/>
    </location>
</feature>
<feature type="active site" description="Proton acceptor" evidence="1">
    <location>
        <position position="108"/>
    </location>
</feature>
<feature type="active site" description="S-methylcysteine intermediate" evidence="1">
    <location>
        <position position="357"/>
    </location>
</feature>
<feature type="binding site" evidence="1">
    <location>
        <position position="128"/>
    </location>
    <ligand>
        <name>[4Fe-4S] cluster</name>
        <dbReference type="ChEBI" id="CHEBI:49883"/>
        <note>4Fe-4S-S-AdoMet</note>
    </ligand>
</feature>
<feature type="binding site" evidence="1">
    <location>
        <position position="132"/>
    </location>
    <ligand>
        <name>[4Fe-4S] cluster</name>
        <dbReference type="ChEBI" id="CHEBI:49883"/>
        <note>4Fe-4S-S-AdoMet</note>
    </ligand>
</feature>
<feature type="binding site" evidence="1">
    <location>
        <position position="135"/>
    </location>
    <ligand>
        <name>[4Fe-4S] cluster</name>
        <dbReference type="ChEBI" id="CHEBI:49883"/>
        <note>4Fe-4S-S-AdoMet</note>
    </ligand>
</feature>
<feature type="binding site" evidence="1">
    <location>
        <begin position="178"/>
        <end position="179"/>
    </location>
    <ligand>
        <name>S-adenosyl-L-methionine</name>
        <dbReference type="ChEBI" id="CHEBI:59789"/>
    </ligand>
</feature>
<feature type="binding site" evidence="1">
    <location>
        <position position="212"/>
    </location>
    <ligand>
        <name>S-adenosyl-L-methionine</name>
        <dbReference type="ChEBI" id="CHEBI:59789"/>
    </ligand>
</feature>
<feature type="binding site" evidence="1">
    <location>
        <begin position="235"/>
        <end position="237"/>
    </location>
    <ligand>
        <name>S-adenosyl-L-methionine</name>
        <dbReference type="ChEBI" id="CHEBI:59789"/>
    </ligand>
</feature>
<feature type="binding site" evidence="1">
    <location>
        <position position="314"/>
    </location>
    <ligand>
        <name>S-adenosyl-L-methionine</name>
        <dbReference type="ChEBI" id="CHEBI:59789"/>
    </ligand>
</feature>
<feature type="disulfide bond" description="(transient)" evidence="1">
    <location>
        <begin position="121"/>
        <end position="357"/>
    </location>
</feature>
<keyword id="KW-0004">4Fe-4S</keyword>
<keyword id="KW-0963">Cytoplasm</keyword>
<keyword id="KW-1015">Disulfide bond</keyword>
<keyword id="KW-0408">Iron</keyword>
<keyword id="KW-0411">Iron-sulfur</keyword>
<keyword id="KW-0479">Metal-binding</keyword>
<keyword id="KW-0489">Methyltransferase</keyword>
<keyword id="KW-1185">Reference proteome</keyword>
<keyword id="KW-0698">rRNA processing</keyword>
<keyword id="KW-0949">S-adenosyl-L-methionine</keyword>
<keyword id="KW-0808">Transferase</keyword>
<keyword id="KW-0819">tRNA processing</keyword>
<reference key="1">
    <citation type="journal article" date="2003" name="Genome Res.">
        <title>Comparative complete genome sequence analysis of the amino acid replacements responsible for the thermostability of Corynebacterium efficiens.</title>
        <authorList>
            <person name="Nishio Y."/>
            <person name="Nakamura Y."/>
            <person name="Kawarabayasi Y."/>
            <person name="Usuda Y."/>
            <person name="Kimura E."/>
            <person name="Sugimoto S."/>
            <person name="Matsui K."/>
            <person name="Yamagishi A."/>
            <person name="Kikuchi H."/>
            <person name="Ikeo K."/>
            <person name="Gojobori T."/>
        </authorList>
    </citation>
    <scope>NUCLEOTIDE SEQUENCE [LARGE SCALE GENOMIC DNA]</scope>
    <source>
        <strain>DSM 44549 / YS-314 / AJ 12310 / JCM 11189 / NBRC 100395</strain>
    </source>
</reference>
<protein>
    <recommendedName>
        <fullName evidence="1">Probable dual-specificity RNA methyltransferase RlmN</fullName>
        <ecNumber evidence="1">2.1.1.192</ecNumber>
    </recommendedName>
    <alternativeName>
        <fullName evidence="1">23S rRNA (adenine(2503)-C(2))-methyltransferase</fullName>
    </alternativeName>
    <alternativeName>
        <fullName evidence="1">23S rRNA m2A2503 methyltransferase</fullName>
    </alternativeName>
    <alternativeName>
        <fullName evidence="1">Ribosomal RNA large subunit methyltransferase N</fullName>
    </alternativeName>
    <alternativeName>
        <fullName evidence="1">tRNA (adenine(37)-C(2))-methyltransferase</fullName>
    </alternativeName>
    <alternativeName>
        <fullName evidence="1">tRNA m2A37 methyltransferase</fullName>
    </alternativeName>
</protein>
<proteinExistence type="inferred from homology"/>
<dbReference type="EC" id="2.1.1.192" evidence="1"/>
<dbReference type="EMBL" id="BA000035">
    <property type="protein sequence ID" value="BAC18717.1"/>
    <property type="molecule type" value="Genomic_DNA"/>
</dbReference>
<dbReference type="RefSeq" id="WP_011075666.1">
    <property type="nucleotide sequence ID" value="NC_004369.1"/>
</dbReference>
<dbReference type="SMR" id="Q8FP78"/>
<dbReference type="STRING" id="196164.gene:10742335"/>
<dbReference type="KEGG" id="cef:CE1907"/>
<dbReference type="eggNOG" id="COG0820">
    <property type="taxonomic scope" value="Bacteria"/>
</dbReference>
<dbReference type="HOGENOM" id="CLU_029101_0_1_11"/>
<dbReference type="OrthoDB" id="9793973at2"/>
<dbReference type="Proteomes" id="UP000001409">
    <property type="component" value="Chromosome"/>
</dbReference>
<dbReference type="GO" id="GO:0005737">
    <property type="term" value="C:cytoplasm"/>
    <property type="evidence" value="ECO:0007669"/>
    <property type="project" value="UniProtKB-SubCell"/>
</dbReference>
<dbReference type="GO" id="GO:0051539">
    <property type="term" value="F:4 iron, 4 sulfur cluster binding"/>
    <property type="evidence" value="ECO:0007669"/>
    <property type="project" value="UniProtKB-UniRule"/>
</dbReference>
<dbReference type="GO" id="GO:0046872">
    <property type="term" value="F:metal ion binding"/>
    <property type="evidence" value="ECO:0007669"/>
    <property type="project" value="UniProtKB-KW"/>
</dbReference>
<dbReference type="GO" id="GO:0070040">
    <property type="term" value="F:rRNA (adenine(2503)-C2-)-methyltransferase activity"/>
    <property type="evidence" value="ECO:0007669"/>
    <property type="project" value="UniProtKB-UniRule"/>
</dbReference>
<dbReference type="GO" id="GO:0019843">
    <property type="term" value="F:rRNA binding"/>
    <property type="evidence" value="ECO:0007669"/>
    <property type="project" value="UniProtKB-UniRule"/>
</dbReference>
<dbReference type="GO" id="GO:0002935">
    <property type="term" value="F:tRNA (adenine(37)-C2)-methyltransferase activity"/>
    <property type="evidence" value="ECO:0007669"/>
    <property type="project" value="UniProtKB-UniRule"/>
</dbReference>
<dbReference type="GO" id="GO:0000049">
    <property type="term" value="F:tRNA binding"/>
    <property type="evidence" value="ECO:0007669"/>
    <property type="project" value="UniProtKB-UniRule"/>
</dbReference>
<dbReference type="GO" id="GO:0070475">
    <property type="term" value="P:rRNA base methylation"/>
    <property type="evidence" value="ECO:0007669"/>
    <property type="project" value="UniProtKB-UniRule"/>
</dbReference>
<dbReference type="GO" id="GO:0030488">
    <property type="term" value="P:tRNA methylation"/>
    <property type="evidence" value="ECO:0007669"/>
    <property type="project" value="UniProtKB-UniRule"/>
</dbReference>
<dbReference type="CDD" id="cd01335">
    <property type="entry name" value="Radical_SAM"/>
    <property type="match status" value="1"/>
</dbReference>
<dbReference type="FunFam" id="3.20.20.70:FF:000014">
    <property type="entry name" value="Probable dual-specificity RNA methyltransferase RlmN"/>
    <property type="match status" value="1"/>
</dbReference>
<dbReference type="Gene3D" id="1.10.150.530">
    <property type="match status" value="1"/>
</dbReference>
<dbReference type="Gene3D" id="3.20.20.70">
    <property type="entry name" value="Aldolase class I"/>
    <property type="match status" value="1"/>
</dbReference>
<dbReference type="HAMAP" id="MF_01849">
    <property type="entry name" value="RNA_methyltr_RlmN"/>
    <property type="match status" value="1"/>
</dbReference>
<dbReference type="InterPro" id="IPR013785">
    <property type="entry name" value="Aldolase_TIM"/>
</dbReference>
<dbReference type="InterPro" id="IPR040072">
    <property type="entry name" value="Methyltransferase_A"/>
</dbReference>
<dbReference type="InterPro" id="IPR027492">
    <property type="entry name" value="RNA_MTrfase_RlmN"/>
</dbReference>
<dbReference type="InterPro" id="IPR004383">
    <property type="entry name" value="rRNA_lsu_MTrfase_RlmN/Cfr"/>
</dbReference>
<dbReference type="InterPro" id="IPR007197">
    <property type="entry name" value="rSAM"/>
</dbReference>
<dbReference type="NCBIfam" id="TIGR00048">
    <property type="entry name" value="rRNA_mod_RlmN"/>
    <property type="match status" value="1"/>
</dbReference>
<dbReference type="PANTHER" id="PTHR30544">
    <property type="entry name" value="23S RRNA METHYLTRANSFERASE"/>
    <property type="match status" value="1"/>
</dbReference>
<dbReference type="PANTHER" id="PTHR30544:SF5">
    <property type="entry name" value="RADICAL SAM CORE DOMAIN-CONTAINING PROTEIN"/>
    <property type="match status" value="1"/>
</dbReference>
<dbReference type="Pfam" id="PF04055">
    <property type="entry name" value="Radical_SAM"/>
    <property type="match status" value="1"/>
</dbReference>
<dbReference type="PIRSF" id="PIRSF006004">
    <property type="entry name" value="CHP00048"/>
    <property type="match status" value="1"/>
</dbReference>
<dbReference type="SFLD" id="SFLDF00275">
    <property type="entry name" value="adenosine_C2_methyltransferase"/>
    <property type="match status" value="1"/>
</dbReference>
<dbReference type="SFLD" id="SFLDG01062">
    <property type="entry name" value="methyltransferase_(Class_A)"/>
    <property type="match status" value="1"/>
</dbReference>
<dbReference type="SUPFAM" id="SSF102114">
    <property type="entry name" value="Radical SAM enzymes"/>
    <property type="match status" value="1"/>
</dbReference>
<dbReference type="PROSITE" id="PS51918">
    <property type="entry name" value="RADICAL_SAM"/>
    <property type="match status" value="1"/>
</dbReference>